<reference key="1">
    <citation type="submission" date="2008-01" db="EMBL/GenBank/DDBJ databases">
        <title>Complete sequence of Thermoanaerobacter pseudethanolicus 39E.</title>
        <authorList>
            <person name="Copeland A."/>
            <person name="Lucas S."/>
            <person name="Lapidus A."/>
            <person name="Barry K."/>
            <person name="Glavina del Rio T."/>
            <person name="Dalin E."/>
            <person name="Tice H."/>
            <person name="Pitluck S."/>
            <person name="Bruce D."/>
            <person name="Goodwin L."/>
            <person name="Saunders E."/>
            <person name="Brettin T."/>
            <person name="Detter J.C."/>
            <person name="Han C."/>
            <person name="Schmutz J."/>
            <person name="Larimer F."/>
            <person name="Land M."/>
            <person name="Hauser L."/>
            <person name="Kyrpides N."/>
            <person name="Lykidis A."/>
            <person name="Hemme C."/>
            <person name="Fields M.W."/>
            <person name="He Z."/>
            <person name="Zhou J."/>
            <person name="Richardson P."/>
        </authorList>
    </citation>
    <scope>NUCLEOTIDE SEQUENCE [LARGE SCALE GENOMIC DNA]</scope>
    <source>
        <strain>ATCC 33223 / DSM 2355 / 39E</strain>
    </source>
</reference>
<gene>
    <name evidence="1" type="primary">pdxT</name>
    <name type="ordered locus">Teth39_1559</name>
</gene>
<sequence length="189" mass="20832">MRVGVLAIQGSVREHIEKLKLIDGVEAVLAKDKNTLLSLDALIIPGGESTAIGKMIVDFGLKDAILKLNERKIPIWGTCAGMILMAKYIVNDDKVHLGIMDISVKRNAYGSQLDSFKTKLIIPAVSNNEIEAVFIRAPYIENVGNGVRILAKHQGKIVAAQQDNLLATSFHPELTDDLSFYKYFLRLNS</sequence>
<name>PDXT_THEP3</name>
<comment type="function">
    <text evidence="1">Catalyzes the hydrolysis of glutamine to glutamate and ammonia as part of the biosynthesis of pyridoxal 5'-phosphate. The resulting ammonia molecule is channeled to the active site of PdxS.</text>
</comment>
<comment type="catalytic activity">
    <reaction evidence="1">
        <text>aldehydo-D-ribose 5-phosphate + D-glyceraldehyde 3-phosphate + L-glutamine = pyridoxal 5'-phosphate + L-glutamate + phosphate + 3 H2O + H(+)</text>
        <dbReference type="Rhea" id="RHEA:31507"/>
        <dbReference type="ChEBI" id="CHEBI:15377"/>
        <dbReference type="ChEBI" id="CHEBI:15378"/>
        <dbReference type="ChEBI" id="CHEBI:29985"/>
        <dbReference type="ChEBI" id="CHEBI:43474"/>
        <dbReference type="ChEBI" id="CHEBI:58273"/>
        <dbReference type="ChEBI" id="CHEBI:58359"/>
        <dbReference type="ChEBI" id="CHEBI:59776"/>
        <dbReference type="ChEBI" id="CHEBI:597326"/>
        <dbReference type="EC" id="4.3.3.6"/>
    </reaction>
</comment>
<comment type="catalytic activity">
    <reaction evidence="1">
        <text>L-glutamine + H2O = L-glutamate + NH4(+)</text>
        <dbReference type="Rhea" id="RHEA:15889"/>
        <dbReference type="ChEBI" id="CHEBI:15377"/>
        <dbReference type="ChEBI" id="CHEBI:28938"/>
        <dbReference type="ChEBI" id="CHEBI:29985"/>
        <dbReference type="ChEBI" id="CHEBI:58359"/>
        <dbReference type="EC" id="3.5.1.2"/>
    </reaction>
</comment>
<comment type="pathway">
    <text evidence="1">Cofactor biosynthesis; pyridoxal 5'-phosphate biosynthesis.</text>
</comment>
<comment type="subunit">
    <text evidence="1">In the presence of PdxS, forms a dodecamer of heterodimers. Only shows activity in the heterodimer.</text>
</comment>
<comment type="similarity">
    <text evidence="1">Belongs to the glutaminase PdxT/SNO family.</text>
</comment>
<keyword id="KW-0315">Glutamine amidotransferase</keyword>
<keyword id="KW-0378">Hydrolase</keyword>
<keyword id="KW-0456">Lyase</keyword>
<keyword id="KW-0663">Pyridoxal phosphate</keyword>
<keyword id="KW-1185">Reference proteome</keyword>
<accession>B0KAS0</accession>
<protein>
    <recommendedName>
        <fullName evidence="1">Pyridoxal 5'-phosphate synthase subunit PdxT</fullName>
        <ecNumber evidence="1">4.3.3.6</ecNumber>
    </recommendedName>
    <alternativeName>
        <fullName evidence="1">Pdx2</fullName>
    </alternativeName>
    <alternativeName>
        <fullName evidence="1">Pyridoxal 5'-phosphate synthase glutaminase subunit</fullName>
        <ecNumber evidence="1">3.5.1.2</ecNumber>
    </alternativeName>
</protein>
<feature type="chain" id="PRO_1000185912" description="Pyridoxal 5'-phosphate synthase subunit PdxT">
    <location>
        <begin position="1"/>
        <end position="189"/>
    </location>
</feature>
<feature type="active site" description="Nucleophile" evidence="1">
    <location>
        <position position="79"/>
    </location>
</feature>
<feature type="active site" description="Charge relay system" evidence="1">
    <location>
        <position position="171"/>
    </location>
</feature>
<feature type="active site" description="Charge relay system" evidence="1">
    <location>
        <position position="173"/>
    </location>
</feature>
<feature type="binding site" evidence="1">
    <location>
        <begin position="47"/>
        <end position="49"/>
    </location>
    <ligand>
        <name>L-glutamine</name>
        <dbReference type="ChEBI" id="CHEBI:58359"/>
    </ligand>
</feature>
<feature type="binding site" evidence="1">
    <location>
        <position position="106"/>
    </location>
    <ligand>
        <name>L-glutamine</name>
        <dbReference type="ChEBI" id="CHEBI:58359"/>
    </ligand>
</feature>
<feature type="binding site" evidence="1">
    <location>
        <begin position="135"/>
        <end position="136"/>
    </location>
    <ligand>
        <name>L-glutamine</name>
        <dbReference type="ChEBI" id="CHEBI:58359"/>
    </ligand>
</feature>
<organism>
    <name type="scientific">Thermoanaerobacter pseudethanolicus (strain ATCC 33223 / 39E)</name>
    <name type="common">Clostridium thermohydrosulfuricum</name>
    <dbReference type="NCBI Taxonomy" id="340099"/>
    <lineage>
        <taxon>Bacteria</taxon>
        <taxon>Bacillati</taxon>
        <taxon>Bacillota</taxon>
        <taxon>Clostridia</taxon>
        <taxon>Thermoanaerobacterales</taxon>
        <taxon>Thermoanaerobacteraceae</taxon>
        <taxon>Thermoanaerobacter</taxon>
    </lineage>
</organism>
<proteinExistence type="inferred from homology"/>
<evidence type="ECO:0000255" key="1">
    <source>
        <dbReference type="HAMAP-Rule" id="MF_01615"/>
    </source>
</evidence>
<dbReference type="EC" id="4.3.3.6" evidence="1"/>
<dbReference type="EC" id="3.5.1.2" evidence="1"/>
<dbReference type="EMBL" id="CP000924">
    <property type="protein sequence ID" value="ABY95204.1"/>
    <property type="molecule type" value="Genomic_DNA"/>
</dbReference>
<dbReference type="RefSeq" id="WP_012268782.1">
    <property type="nucleotide sequence ID" value="NC_010321.1"/>
</dbReference>
<dbReference type="SMR" id="B0KAS0"/>
<dbReference type="STRING" id="340099.Teth39_1559"/>
<dbReference type="MEROPS" id="C26.A32"/>
<dbReference type="KEGG" id="tpd:Teth39_1559"/>
<dbReference type="eggNOG" id="COG0311">
    <property type="taxonomic scope" value="Bacteria"/>
</dbReference>
<dbReference type="HOGENOM" id="CLU_069674_2_0_9"/>
<dbReference type="UniPathway" id="UPA00245"/>
<dbReference type="Proteomes" id="UP000002156">
    <property type="component" value="Chromosome"/>
</dbReference>
<dbReference type="GO" id="GO:0005829">
    <property type="term" value="C:cytosol"/>
    <property type="evidence" value="ECO:0007669"/>
    <property type="project" value="TreeGrafter"/>
</dbReference>
<dbReference type="GO" id="GO:1903600">
    <property type="term" value="C:glutaminase complex"/>
    <property type="evidence" value="ECO:0007669"/>
    <property type="project" value="TreeGrafter"/>
</dbReference>
<dbReference type="GO" id="GO:0004359">
    <property type="term" value="F:glutaminase activity"/>
    <property type="evidence" value="ECO:0007669"/>
    <property type="project" value="UniProtKB-UniRule"/>
</dbReference>
<dbReference type="GO" id="GO:0036381">
    <property type="term" value="F:pyridoxal 5'-phosphate synthase (glutamine hydrolysing) activity"/>
    <property type="evidence" value="ECO:0007669"/>
    <property type="project" value="UniProtKB-UniRule"/>
</dbReference>
<dbReference type="GO" id="GO:0006543">
    <property type="term" value="P:glutamine catabolic process"/>
    <property type="evidence" value="ECO:0007669"/>
    <property type="project" value="UniProtKB-UniRule"/>
</dbReference>
<dbReference type="GO" id="GO:0042823">
    <property type="term" value="P:pyridoxal phosphate biosynthetic process"/>
    <property type="evidence" value="ECO:0007669"/>
    <property type="project" value="UniProtKB-UniRule"/>
</dbReference>
<dbReference type="GO" id="GO:0008614">
    <property type="term" value="P:pyridoxine metabolic process"/>
    <property type="evidence" value="ECO:0007669"/>
    <property type="project" value="TreeGrafter"/>
</dbReference>
<dbReference type="CDD" id="cd01749">
    <property type="entry name" value="GATase1_PB"/>
    <property type="match status" value="1"/>
</dbReference>
<dbReference type="FunFam" id="3.40.50.880:FF:000010">
    <property type="entry name" value="uncharacterized protein LOC100176842 isoform X2"/>
    <property type="match status" value="1"/>
</dbReference>
<dbReference type="Gene3D" id="3.40.50.880">
    <property type="match status" value="1"/>
</dbReference>
<dbReference type="HAMAP" id="MF_01615">
    <property type="entry name" value="PdxT"/>
    <property type="match status" value="1"/>
</dbReference>
<dbReference type="InterPro" id="IPR029062">
    <property type="entry name" value="Class_I_gatase-like"/>
</dbReference>
<dbReference type="InterPro" id="IPR002161">
    <property type="entry name" value="PdxT/SNO"/>
</dbReference>
<dbReference type="InterPro" id="IPR021196">
    <property type="entry name" value="PdxT/SNO_CS"/>
</dbReference>
<dbReference type="NCBIfam" id="TIGR03800">
    <property type="entry name" value="PLP_synth_Pdx2"/>
    <property type="match status" value="1"/>
</dbReference>
<dbReference type="PANTHER" id="PTHR31559">
    <property type="entry name" value="PYRIDOXAL 5'-PHOSPHATE SYNTHASE SUBUNIT SNO"/>
    <property type="match status" value="1"/>
</dbReference>
<dbReference type="PANTHER" id="PTHR31559:SF0">
    <property type="entry name" value="PYRIDOXAL 5'-PHOSPHATE SYNTHASE SUBUNIT SNO1-RELATED"/>
    <property type="match status" value="1"/>
</dbReference>
<dbReference type="Pfam" id="PF01174">
    <property type="entry name" value="SNO"/>
    <property type="match status" value="1"/>
</dbReference>
<dbReference type="PIRSF" id="PIRSF005639">
    <property type="entry name" value="Glut_amidoT_SNO"/>
    <property type="match status" value="1"/>
</dbReference>
<dbReference type="SUPFAM" id="SSF52317">
    <property type="entry name" value="Class I glutamine amidotransferase-like"/>
    <property type="match status" value="1"/>
</dbReference>
<dbReference type="PROSITE" id="PS01236">
    <property type="entry name" value="PDXT_SNO_1"/>
    <property type="match status" value="1"/>
</dbReference>
<dbReference type="PROSITE" id="PS51130">
    <property type="entry name" value="PDXT_SNO_2"/>
    <property type="match status" value="1"/>
</dbReference>